<reference key="1">
    <citation type="journal article" date="1989" name="Virology">
        <title>The sequences of the reovirus serotype 1, 2, and 3 L1 genome segments and analysis of the mode of divergence of the reovirus serotypes.</title>
        <authorList>
            <person name="Wiener J.R."/>
            <person name="Joklik W.K."/>
        </authorList>
    </citation>
    <scope>NUCLEOTIDE SEQUENCE [GENOMIC RNA]</scope>
</reference>
<reference key="2">
    <citation type="journal article" date="2005" name="Structure">
        <title>Features of reovirus outer capsid protein mu1 revealed by electron cryomicroscopy and image reconstruction of the virion at 7.0 Angstrom resolution.</title>
        <authorList>
            <person name="Zhang X."/>
            <person name="Ji Y."/>
            <person name="Zhang L."/>
            <person name="Harrison S.C."/>
            <person name="Marinescu D.C."/>
            <person name="Nibert M.L."/>
            <person name="Baker T.S."/>
        </authorList>
    </citation>
    <scope>STRUCTURE BY ELECTRON MICROSCOPY (7.0 ANGSTROMS)</scope>
</reference>
<dbReference type="EC" id="2.7.7.48"/>
<dbReference type="EMBL" id="M24734">
    <property type="protein sequence ID" value="AAA47234.1"/>
    <property type="molecule type" value="Genomic_RNA"/>
</dbReference>
<dbReference type="PIR" id="A30121">
    <property type="entry name" value="MWXR31"/>
</dbReference>
<dbReference type="PDB" id="2CSE">
    <property type="method" value="EM"/>
    <property type="resolution" value="7.00 A"/>
    <property type="chains" value="1=1-1267"/>
</dbReference>
<dbReference type="PDBsum" id="2CSE"/>
<dbReference type="SMR" id="P0CK32"/>
<dbReference type="EvolutionaryTrace" id="P0CK32"/>
<dbReference type="Proteomes" id="UP000007253">
    <property type="component" value="Genome"/>
</dbReference>
<dbReference type="GO" id="GO:0019013">
    <property type="term" value="C:viral nucleocapsid"/>
    <property type="evidence" value="ECO:0007669"/>
    <property type="project" value="InterPro"/>
</dbReference>
<dbReference type="GO" id="GO:0000166">
    <property type="term" value="F:nucleotide binding"/>
    <property type="evidence" value="ECO:0007669"/>
    <property type="project" value="UniProtKB-KW"/>
</dbReference>
<dbReference type="GO" id="GO:0003723">
    <property type="term" value="F:RNA binding"/>
    <property type="evidence" value="ECO:0007669"/>
    <property type="project" value="InterPro"/>
</dbReference>
<dbReference type="GO" id="GO:0003968">
    <property type="term" value="F:RNA-directed RNA polymerase activity"/>
    <property type="evidence" value="ECO:0007669"/>
    <property type="project" value="UniProtKB-KW"/>
</dbReference>
<dbReference type="GO" id="GO:0019079">
    <property type="term" value="P:viral genome replication"/>
    <property type="evidence" value="ECO:0007669"/>
    <property type="project" value="InterPro"/>
</dbReference>
<dbReference type="Gene3D" id="3.90.1850.10">
    <property type="entry name" value="RNA-directed RNA polymerase lambda-3"/>
    <property type="match status" value="1"/>
</dbReference>
<dbReference type="InterPro" id="IPR043502">
    <property type="entry name" value="DNA/RNA_pol_sf"/>
</dbReference>
<dbReference type="InterPro" id="IPR012915">
    <property type="entry name" value="RdRP_5"/>
</dbReference>
<dbReference type="InterPro" id="IPR007097">
    <property type="entry name" value="RNA-dir_pol_reovirus"/>
</dbReference>
<dbReference type="Pfam" id="PF07925">
    <property type="entry name" value="RdRP_5"/>
    <property type="match status" value="1"/>
</dbReference>
<dbReference type="SUPFAM" id="SSF56672">
    <property type="entry name" value="DNA/RNA polymerases"/>
    <property type="match status" value="1"/>
</dbReference>
<dbReference type="PROSITE" id="PS50523">
    <property type="entry name" value="RDRP_DSRNA_REO"/>
    <property type="match status" value="1"/>
</dbReference>
<organismHost>
    <name type="scientific">Mammalia</name>
    <dbReference type="NCBI Taxonomy" id="40674"/>
</organismHost>
<gene>
    <name type="primary">L1</name>
</gene>
<proteinExistence type="evidence at protein level"/>
<feature type="chain" id="PRO_0000222745" description="RNA-directed RNA polymerase lambda-3">
    <location>
        <begin position="1"/>
        <end position="1267"/>
    </location>
</feature>
<feature type="domain" description="RdRp catalytic" evidence="1">
    <location>
        <begin position="555"/>
        <end position="792"/>
    </location>
</feature>
<evidence type="ECO:0000255" key="1">
    <source>
        <dbReference type="PROSITE-ProRule" id="PRU00539"/>
    </source>
</evidence>
<evidence type="ECO:0000305" key="2"/>
<name>RDRP_REOVL</name>
<protein>
    <recommendedName>
        <fullName>RNA-directed RNA polymerase lambda-3</fullName>
        <shortName>Lambda3</shortName>
        <ecNumber>2.7.7.48</ecNumber>
    </recommendedName>
    <alternativeName>
        <fullName>Lambda3(Pol)</fullName>
    </alternativeName>
</protein>
<sequence length="1267" mass="142355">MSSMILTQFRPFIESISGITDQSNDVFEDAAKAFSMFTRSDVYKALDEIPFSDDAMLPIPPTIYTKPSHDSYYYIDALNRVRRKTYQGPDDVYVPNCSIVELLEPHETLTSYGRLSEAIENRAKDGDSQARIATTYGRIAESQARQIKAPLEKFVLALLVSEAGGSLYDPVLQKYDEIPDLSHNCPLWCFREICRHISGPLPDRAPYLYLSAGVFWLMSPRMTSAIPPLLSDLVNLAILQQTAGLDPSLVKLGVQICLHAAASSSYAWFILKTKSIFPQNTLHSMYESLEGGYCPNLEWLEPRSDYKFMYMGVMPLSTKYARSAPSNDKKARELGEKYGLSSVVSELRKRTKTYVKHDFASVRYIRDAMACTSGIFLVRTPTETVLQEYTQSPEIKVPIPQKDWTGPVGEIRILKDTTSSIARYLYRTWYLAAARMAAQPRTWDPLFQAIMRSQYVTARGGSGAALRESLYAINVSLPDFKGLPVKAATKIFQAAQLANLPFSHTSVAILADTSMGLRNQVQRRPRSIMPLNVPQQQVSAPHTLTADYINYHMNLSTTSGSAVIEKVIPLGVYASSPPNQSINIDISACDASITWDFFLSVIMAAIHEGVASGSIGKPFMGVPASIVNDESVVGVRAARPISGMQNMIQHLSKLYKRGFSYRVNDSFSPGNDFTHMTTTFPSGSTATSTEHTANNSTMMETFLTVWGPEHTDDPDVLRLMKSLTIQRNYVCQGDDGLMIIDGNTAGKVNSETIQKMLELISKYGEEFGWKYDIAYDGTAEYLKLYFIFGCRIPNLSRHPIVGKERANSSAEEPWPAILDQIMGIFFNGVHDGLQWQRWIRYSWALCCAFSRQRTMIGESVGYLQYPMWSFVYWGLPLVKVFGSDPWIFSWYMPTGDLGMYSWISLIRPLMTRWMVANGYATDRCSPVFGNADYRRCFNEIKLYQGYYMAQLPRNPTKSGRAAPREVREQFTQALSDYLMQNPELKSRVLRGRSEWEKYGAGIIHNPPSLFDVPHKWYLGAQEAATATREELAEMDETLMRARRHSYSSFSKLLEAYLLVKWRMCEAREPSVDLRLPLCAGIDPLNSDPFLKMVSVGPMLQSTRKYFAQTLFMAKTVSGLDVNAIDSALLRLRTLGADKKALTAQLLMVGLQESEADALAGKIMLQDVSTVQLARVVNLAVPDTWMSLDFDSMFKHHVKLLPKDGRHLNTDIPPRMGWLRAILRFLGAGMVMTATGVAVDIYLEDIHGGGRALGQRFMTWMRQEGRSA</sequence>
<accession>P0CK32</accession>
<accession>A4ZY20</accession>
<accession>P17376</accession>
<accession>P17378</accession>
<accession>Q85665</accession>
<comment type="function">
    <text>RNA-directed RNA polymerase that is involved in transcription and genome replication. Following infection, it catalyzes the synthesis of fully conservative plus strands. After core assembly, which consists in recruitment of one capped plus-strand for each genomic segments and polymerase complexes, the polymerase switches mode and catalyzes the synthesis of complementary minus-strands.</text>
</comment>
<comment type="catalytic activity">
    <reaction evidence="1">
        <text>RNA(n) + a ribonucleoside 5'-triphosphate = RNA(n+1) + diphosphate</text>
        <dbReference type="Rhea" id="RHEA:21248"/>
        <dbReference type="Rhea" id="RHEA-COMP:14527"/>
        <dbReference type="Rhea" id="RHEA-COMP:17342"/>
        <dbReference type="ChEBI" id="CHEBI:33019"/>
        <dbReference type="ChEBI" id="CHEBI:61557"/>
        <dbReference type="ChEBI" id="CHEBI:140395"/>
        <dbReference type="EC" id="2.7.7.48"/>
    </reaction>
</comment>
<comment type="subcellular location">
    <subcellularLocation>
        <location evidence="2">Virion</location>
    </subcellularLocation>
    <text>Found in the inner capsid (12 copies).</text>
</comment>
<comment type="similarity">
    <text evidence="2">Belongs to the reoviridae RNA-directed RNA polymerase family.</text>
</comment>
<keyword id="KW-0002">3D-structure</keyword>
<keyword id="KW-0167">Capsid protein</keyword>
<keyword id="KW-0547">Nucleotide-binding</keyword>
<keyword id="KW-0548">Nucleotidyltransferase</keyword>
<keyword id="KW-1185">Reference proteome</keyword>
<keyword id="KW-0696">RNA-directed RNA polymerase</keyword>
<keyword id="KW-0808">Transferase</keyword>
<keyword id="KW-0693">Viral RNA replication</keyword>
<keyword id="KW-0946">Virion</keyword>
<organism>
    <name type="scientific">Reovirus type 1 (strain Lang)</name>
    <name type="common">T1L</name>
    <name type="synonym">Mammalian orthoreovirus 1</name>
    <dbReference type="NCBI Taxonomy" id="10884"/>
    <lineage>
        <taxon>Viruses</taxon>
        <taxon>Riboviria</taxon>
        <taxon>Orthornavirae</taxon>
        <taxon>Duplornaviricota</taxon>
        <taxon>Resentoviricetes</taxon>
        <taxon>Reovirales</taxon>
        <taxon>Spinareoviridae</taxon>
        <taxon>Orthoreovirus</taxon>
        <taxon>Mammalian orthoreovirus</taxon>
    </lineage>
</organism>